<accession>A7MLL8</accession>
<comment type="function">
    <text evidence="1">Catalyzes the dehydration of D-mannonate.</text>
</comment>
<comment type="catalytic activity">
    <reaction evidence="1">
        <text>D-mannonate = 2-dehydro-3-deoxy-D-gluconate + H2O</text>
        <dbReference type="Rhea" id="RHEA:20097"/>
        <dbReference type="ChEBI" id="CHEBI:15377"/>
        <dbReference type="ChEBI" id="CHEBI:17767"/>
        <dbReference type="ChEBI" id="CHEBI:57990"/>
        <dbReference type="EC" id="4.2.1.8"/>
    </reaction>
</comment>
<comment type="cofactor">
    <cofactor evidence="1">
        <name>Fe(2+)</name>
        <dbReference type="ChEBI" id="CHEBI:29033"/>
    </cofactor>
    <cofactor evidence="1">
        <name>Mn(2+)</name>
        <dbReference type="ChEBI" id="CHEBI:29035"/>
    </cofactor>
</comment>
<comment type="pathway">
    <text evidence="1">Carbohydrate metabolism; pentose and glucuronate interconversion.</text>
</comment>
<comment type="similarity">
    <text evidence="1">Belongs to the mannonate dehydratase family.</text>
</comment>
<reference key="1">
    <citation type="journal article" date="2010" name="PLoS ONE">
        <title>Genome sequence of Cronobacter sakazakii BAA-894 and comparative genomic hybridization analysis with other Cronobacter species.</title>
        <authorList>
            <person name="Kucerova E."/>
            <person name="Clifton S.W."/>
            <person name="Xia X.Q."/>
            <person name="Long F."/>
            <person name="Porwollik S."/>
            <person name="Fulton L."/>
            <person name="Fronick C."/>
            <person name="Minx P."/>
            <person name="Kyung K."/>
            <person name="Warren W."/>
            <person name="Fulton R."/>
            <person name="Feng D."/>
            <person name="Wollam A."/>
            <person name="Shah N."/>
            <person name="Bhonagiri V."/>
            <person name="Nash W.E."/>
            <person name="Hallsworth-Pepin K."/>
            <person name="Wilson R.K."/>
            <person name="McClelland M."/>
            <person name="Forsythe S.J."/>
        </authorList>
    </citation>
    <scope>NUCLEOTIDE SEQUENCE [LARGE SCALE GENOMIC DNA]</scope>
    <source>
        <strain>ATCC BAA-894</strain>
    </source>
</reference>
<feature type="chain" id="PRO_1000034327" description="Mannonate dehydratase">
    <location>
        <begin position="1"/>
        <end position="396"/>
    </location>
</feature>
<dbReference type="EC" id="4.2.1.8" evidence="1"/>
<dbReference type="EMBL" id="CP000783">
    <property type="protein sequence ID" value="ABU76336.1"/>
    <property type="molecule type" value="Genomic_DNA"/>
</dbReference>
<dbReference type="RefSeq" id="WP_012124262.1">
    <property type="nucleotide sequence ID" value="NC_009778.1"/>
</dbReference>
<dbReference type="SMR" id="A7MLL8"/>
<dbReference type="KEGG" id="esa:ESA_01068"/>
<dbReference type="PATRIC" id="fig|290339.8.peg.944"/>
<dbReference type="HOGENOM" id="CLU_058621_2_0_6"/>
<dbReference type="UniPathway" id="UPA00246"/>
<dbReference type="Proteomes" id="UP000000260">
    <property type="component" value="Chromosome"/>
</dbReference>
<dbReference type="GO" id="GO:0008198">
    <property type="term" value="F:ferrous iron binding"/>
    <property type="evidence" value="ECO:0007669"/>
    <property type="project" value="TreeGrafter"/>
</dbReference>
<dbReference type="GO" id="GO:0030145">
    <property type="term" value="F:manganese ion binding"/>
    <property type="evidence" value="ECO:0007669"/>
    <property type="project" value="TreeGrafter"/>
</dbReference>
<dbReference type="GO" id="GO:0008927">
    <property type="term" value="F:mannonate dehydratase activity"/>
    <property type="evidence" value="ECO:0007669"/>
    <property type="project" value="UniProtKB-UniRule"/>
</dbReference>
<dbReference type="GO" id="GO:0042840">
    <property type="term" value="P:D-glucuronate catabolic process"/>
    <property type="evidence" value="ECO:0007669"/>
    <property type="project" value="TreeGrafter"/>
</dbReference>
<dbReference type="FunFam" id="3.20.20.150:FF:000010">
    <property type="entry name" value="Mannonate dehydratase"/>
    <property type="match status" value="1"/>
</dbReference>
<dbReference type="Gene3D" id="3.20.20.150">
    <property type="entry name" value="Divalent-metal-dependent TIM barrel enzymes"/>
    <property type="match status" value="1"/>
</dbReference>
<dbReference type="HAMAP" id="MF_00106">
    <property type="entry name" value="UxuA"/>
    <property type="match status" value="1"/>
</dbReference>
<dbReference type="InterPro" id="IPR004628">
    <property type="entry name" value="Man_deHydtase"/>
</dbReference>
<dbReference type="InterPro" id="IPR036237">
    <property type="entry name" value="Xyl_isomerase-like_sf"/>
</dbReference>
<dbReference type="NCBIfam" id="NF003027">
    <property type="entry name" value="PRK03906.1"/>
    <property type="match status" value="1"/>
</dbReference>
<dbReference type="NCBIfam" id="TIGR00695">
    <property type="entry name" value="uxuA"/>
    <property type="match status" value="1"/>
</dbReference>
<dbReference type="PANTHER" id="PTHR30387">
    <property type="entry name" value="MANNONATE DEHYDRATASE"/>
    <property type="match status" value="1"/>
</dbReference>
<dbReference type="PANTHER" id="PTHR30387:SF2">
    <property type="entry name" value="MANNONATE DEHYDRATASE"/>
    <property type="match status" value="1"/>
</dbReference>
<dbReference type="Pfam" id="PF03786">
    <property type="entry name" value="UxuA"/>
    <property type="match status" value="1"/>
</dbReference>
<dbReference type="PIRSF" id="PIRSF016049">
    <property type="entry name" value="Man_dehyd"/>
    <property type="match status" value="1"/>
</dbReference>
<dbReference type="SUPFAM" id="SSF51658">
    <property type="entry name" value="Xylose isomerase-like"/>
    <property type="match status" value="1"/>
</dbReference>
<evidence type="ECO:0000255" key="1">
    <source>
        <dbReference type="HAMAP-Rule" id="MF_00106"/>
    </source>
</evidence>
<keyword id="KW-0408">Iron</keyword>
<keyword id="KW-0456">Lyase</keyword>
<keyword id="KW-0464">Manganese</keyword>
<keyword id="KW-1185">Reference proteome</keyword>
<protein>
    <recommendedName>
        <fullName evidence="1">Mannonate dehydratase</fullName>
        <ecNumber evidence="1">4.2.1.8</ecNumber>
    </recommendedName>
    <alternativeName>
        <fullName evidence="1">D-mannonate hydro-lyase</fullName>
    </alternativeName>
</protein>
<gene>
    <name evidence="1" type="primary">uxuA</name>
    <name type="ordered locus">ESA_01068</name>
</gene>
<name>UXUA_CROS8</name>
<sequence>MEQTWRWYGPNDPVSLDDIRQAGATGIVTALHHIPNGEVWPVEEIKKRQAELAQKGLTWSVVESIPVHEDIKTHTGQYDRYIASYQQSIRNLAACGIDTVCYNFMPILDWTRTDLEYTLPDGSKALRFDHIAFAAFELHILKRDGARHDYTDDEQRQAQDYFSAMSEAQIETLTRNIIAGLPGAEEGYTLDQFRARLSEYDHIDKTALRDNMAYFLKAIVPVAEEAGVRLAVHPDDPPRPILGLPRIVSTIEDMQWLKETVDSIHNGFTMCTGSYGVRADNDLVRMVETFADRIHFTHLRSTCREANPKTFHEAAHLYGDVDMVAVVKAILTEEQRRKKAGDLRPIPFRPDHGHQMLDDLRKKTNPGYSAIGRLKGLAEVRGVELALKKVLFPDLL</sequence>
<proteinExistence type="inferred from homology"/>
<organism>
    <name type="scientific">Cronobacter sakazakii (strain ATCC BAA-894)</name>
    <name type="common">Enterobacter sakazakii</name>
    <dbReference type="NCBI Taxonomy" id="290339"/>
    <lineage>
        <taxon>Bacteria</taxon>
        <taxon>Pseudomonadati</taxon>
        <taxon>Pseudomonadota</taxon>
        <taxon>Gammaproteobacteria</taxon>
        <taxon>Enterobacterales</taxon>
        <taxon>Enterobacteriaceae</taxon>
        <taxon>Cronobacter</taxon>
    </lineage>
</organism>